<evidence type="ECO:0000255" key="1">
    <source>
        <dbReference type="HAMAP-Rule" id="MF_01445"/>
    </source>
</evidence>
<gene>
    <name evidence="1" type="primary">tsaD</name>
    <name type="synonym">gcp</name>
    <name type="ordered locus">jhp_1491</name>
</gene>
<protein>
    <recommendedName>
        <fullName evidence="1">tRNA N6-adenosine threonylcarbamoyltransferase</fullName>
        <ecNumber evidence="1">2.3.1.234</ecNumber>
    </recommendedName>
    <alternativeName>
        <fullName evidence="1">N6-L-threonylcarbamoyladenine synthase</fullName>
        <shortName evidence="1">t(6)A synthase</shortName>
    </alternativeName>
    <alternativeName>
        <fullName evidence="1">t(6)A37 threonylcarbamoyladenosine biosynthesis protein TsaD</fullName>
    </alternativeName>
    <alternativeName>
        <fullName evidence="1">tRNA threonylcarbamoyladenosine biosynthesis protein TsaD</fullName>
    </alternativeName>
</protein>
<keyword id="KW-0012">Acyltransferase</keyword>
<keyword id="KW-0963">Cytoplasm</keyword>
<keyword id="KW-0408">Iron</keyword>
<keyword id="KW-0479">Metal-binding</keyword>
<keyword id="KW-0808">Transferase</keyword>
<keyword id="KW-0819">tRNA processing</keyword>
<accession>Q9ZJ27</accession>
<proteinExistence type="inferred from homology"/>
<dbReference type="EC" id="2.3.1.234" evidence="1"/>
<dbReference type="EMBL" id="AE001439">
    <property type="protein sequence ID" value="AAD07065.1"/>
    <property type="molecule type" value="Genomic_DNA"/>
</dbReference>
<dbReference type="PIR" id="E71801">
    <property type="entry name" value="E71801"/>
</dbReference>
<dbReference type="RefSeq" id="WP_000603625.1">
    <property type="nucleotide sequence ID" value="NC_000921.1"/>
</dbReference>
<dbReference type="SMR" id="Q9ZJ27"/>
<dbReference type="KEGG" id="hpj:jhp_1491"/>
<dbReference type="PATRIC" id="fig|85963.30.peg.1050"/>
<dbReference type="eggNOG" id="COG0533">
    <property type="taxonomic scope" value="Bacteria"/>
</dbReference>
<dbReference type="Proteomes" id="UP000000804">
    <property type="component" value="Chromosome"/>
</dbReference>
<dbReference type="GO" id="GO:0005737">
    <property type="term" value="C:cytoplasm"/>
    <property type="evidence" value="ECO:0007669"/>
    <property type="project" value="UniProtKB-SubCell"/>
</dbReference>
<dbReference type="GO" id="GO:0005506">
    <property type="term" value="F:iron ion binding"/>
    <property type="evidence" value="ECO:0007669"/>
    <property type="project" value="UniProtKB-UniRule"/>
</dbReference>
<dbReference type="GO" id="GO:0061711">
    <property type="term" value="F:N(6)-L-threonylcarbamoyladenine synthase activity"/>
    <property type="evidence" value="ECO:0007669"/>
    <property type="project" value="UniProtKB-EC"/>
</dbReference>
<dbReference type="GO" id="GO:0002949">
    <property type="term" value="P:tRNA threonylcarbamoyladenosine modification"/>
    <property type="evidence" value="ECO:0007669"/>
    <property type="project" value="UniProtKB-UniRule"/>
</dbReference>
<dbReference type="FunFam" id="3.30.420.40:FF:000359">
    <property type="entry name" value="tRNA N6-adenosine threonylcarbamoyltransferase"/>
    <property type="match status" value="1"/>
</dbReference>
<dbReference type="Gene3D" id="3.30.420.40">
    <property type="match status" value="2"/>
</dbReference>
<dbReference type="HAMAP" id="MF_01445">
    <property type="entry name" value="TsaD"/>
    <property type="match status" value="1"/>
</dbReference>
<dbReference type="InterPro" id="IPR043129">
    <property type="entry name" value="ATPase_NBD"/>
</dbReference>
<dbReference type="InterPro" id="IPR000905">
    <property type="entry name" value="Gcp-like_dom"/>
</dbReference>
<dbReference type="InterPro" id="IPR017861">
    <property type="entry name" value="KAE1/TsaD"/>
</dbReference>
<dbReference type="InterPro" id="IPR017860">
    <property type="entry name" value="Peptidase_M22_CS"/>
</dbReference>
<dbReference type="InterPro" id="IPR022450">
    <property type="entry name" value="TsaD"/>
</dbReference>
<dbReference type="NCBIfam" id="TIGR00329">
    <property type="entry name" value="gcp_kae1"/>
    <property type="match status" value="1"/>
</dbReference>
<dbReference type="NCBIfam" id="TIGR03723">
    <property type="entry name" value="T6A_TsaD_YgjD"/>
    <property type="match status" value="1"/>
</dbReference>
<dbReference type="PANTHER" id="PTHR11735">
    <property type="entry name" value="TRNA N6-ADENOSINE THREONYLCARBAMOYLTRANSFERASE"/>
    <property type="match status" value="1"/>
</dbReference>
<dbReference type="PANTHER" id="PTHR11735:SF6">
    <property type="entry name" value="TRNA N6-ADENOSINE THREONYLCARBAMOYLTRANSFERASE, MITOCHONDRIAL"/>
    <property type="match status" value="1"/>
</dbReference>
<dbReference type="Pfam" id="PF00814">
    <property type="entry name" value="TsaD"/>
    <property type="match status" value="1"/>
</dbReference>
<dbReference type="PRINTS" id="PR00789">
    <property type="entry name" value="OSIALOPTASE"/>
</dbReference>
<dbReference type="SUPFAM" id="SSF53067">
    <property type="entry name" value="Actin-like ATPase domain"/>
    <property type="match status" value="1"/>
</dbReference>
<dbReference type="PROSITE" id="PS01016">
    <property type="entry name" value="GLYCOPROTEASE"/>
    <property type="match status" value="1"/>
</dbReference>
<comment type="function">
    <text evidence="1">Required for the formation of a threonylcarbamoyl group on adenosine at position 37 (t(6)A37) in tRNAs that read codons beginning with adenine. Is involved in the transfer of the threonylcarbamoyl moiety of threonylcarbamoyl-AMP (TC-AMP) to the N6 group of A37, together with TsaE and TsaB. TsaD likely plays a direct catalytic role in this reaction.</text>
</comment>
<comment type="catalytic activity">
    <reaction evidence="1">
        <text>L-threonylcarbamoyladenylate + adenosine(37) in tRNA = N(6)-L-threonylcarbamoyladenosine(37) in tRNA + AMP + H(+)</text>
        <dbReference type="Rhea" id="RHEA:37059"/>
        <dbReference type="Rhea" id="RHEA-COMP:10162"/>
        <dbReference type="Rhea" id="RHEA-COMP:10163"/>
        <dbReference type="ChEBI" id="CHEBI:15378"/>
        <dbReference type="ChEBI" id="CHEBI:73682"/>
        <dbReference type="ChEBI" id="CHEBI:74411"/>
        <dbReference type="ChEBI" id="CHEBI:74418"/>
        <dbReference type="ChEBI" id="CHEBI:456215"/>
        <dbReference type="EC" id="2.3.1.234"/>
    </reaction>
</comment>
<comment type="cofactor">
    <cofactor evidence="1">
        <name>Fe(2+)</name>
        <dbReference type="ChEBI" id="CHEBI:29033"/>
    </cofactor>
    <text evidence="1">Binds 1 Fe(2+) ion per subunit.</text>
</comment>
<comment type="subcellular location">
    <subcellularLocation>
        <location evidence="1">Cytoplasm</location>
    </subcellularLocation>
</comment>
<comment type="similarity">
    <text evidence="1">Belongs to the KAE1 / TsaD family.</text>
</comment>
<sequence>MILSIESSCDDSSLALTRIEDAKLIAHFKISQEKHHSSYGGVVPEIASRLHAENLPLLLERVKISLNKDFSKIKAIAITNQPGLSVTLIEGLMMAKALSLSLNLPLILEDHLRGHVYSLFINEKQTRMPLSVLLVSGGHSLILEARDYEDIKIVATSLDDSFGESFDKVSKMLDLGYPGGPIVEKLALDYAHPNEPLMFPIPLKNSPNLAFSFSGLKNAVRLEVEKNAHNLNDEVKQKIGYHFQSAAIEHLIQQTKRYFKIKRPKIFGIVGGASQNLALRKAFEDLCAEFDCELVLAPLEFCSDNAAMIGRSSLEAYQKKRFIPLEKADISPRTLLKNFE</sequence>
<name>TSAD_HELPJ</name>
<reference key="1">
    <citation type="journal article" date="1999" name="Nature">
        <title>Genomic sequence comparison of two unrelated isolates of the human gastric pathogen Helicobacter pylori.</title>
        <authorList>
            <person name="Alm R.A."/>
            <person name="Ling L.-S.L."/>
            <person name="Moir D.T."/>
            <person name="King B.L."/>
            <person name="Brown E.D."/>
            <person name="Doig P.C."/>
            <person name="Smith D.R."/>
            <person name="Noonan B."/>
            <person name="Guild B.C."/>
            <person name="deJonge B.L."/>
            <person name="Carmel G."/>
            <person name="Tummino P.J."/>
            <person name="Caruso A."/>
            <person name="Uria-Nickelsen M."/>
            <person name="Mills D.M."/>
            <person name="Ives C."/>
            <person name="Gibson R."/>
            <person name="Merberg D."/>
            <person name="Mills S.D."/>
            <person name="Jiang Q."/>
            <person name="Taylor D.E."/>
            <person name="Vovis G.F."/>
            <person name="Trust T.J."/>
        </authorList>
    </citation>
    <scope>NUCLEOTIDE SEQUENCE [LARGE SCALE GENOMIC DNA]</scope>
    <source>
        <strain>J99 / ATCC 700824</strain>
    </source>
</reference>
<organism>
    <name type="scientific">Helicobacter pylori (strain J99 / ATCC 700824)</name>
    <name type="common">Campylobacter pylori J99</name>
    <dbReference type="NCBI Taxonomy" id="85963"/>
    <lineage>
        <taxon>Bacteria</taxon>
        <taxon>Pseudomonadati</taxon>
        <taxon>Campylobacterota</taxon>
        <taxon>Epsilonproteobacteria</taxon>
        <taxon>Campylobacterales</taxon>
        <taxon>Helicobacteraceae</taxon>
        <taxon>Helicobacter</taxon>
    </lineage>
</organism>
<feature type="chain" id="PRO_0000096966" description="tRNA N6-adenosine threonylcarbamoyltransferase">
    <location>
        <begin position="1"/>
        <end position="340"/>
    </location>
</feature>
<feature type="binding site" evidence="1">
    <location>
        <position position="111"/>
    </location>
    <ligand>
        <name>Fe cation</name>
        <dbReference type="ChEBI" id="CHEBI:24875"/>
    </ligand>
</feature>
<feature type="binding site" evidence="1">
    <location>
        <position position="115"/>
    </location>
    <ligand>
        <name>Fe cation</name>
        <dbReference type="ChEBI" id="CHEBI:24875"/>
    </ligand>
</feature>
<feature type="binding site" evidence="1">
    <location>
        <begin position="134"/>
        <end position="138"/>
    </location>
    <ligand>
        <name>substrate</name>
    </ligand>
</feature>
<feature type="binding site" evidence="1">
    <location>
        <position position="167"/>
    </location>
    <ligand>
        <name>substrate</name>
    </ligand>
</feature>
<feature type="binding site" evidence="1">
    <location>
        <position position="180"/>
    </location>
    <ligand>
        <name>substrate</name>
    </ligand>
</feature>
<feature type="binding site" evidence="1">
    <location>
        <position position="276"/>
    </location>
    <ligand>
        <name>substrate</name>
    </ligand>
</feature>
<feature type="binding site" evidence="1">
    <location>
        <position position="304"/>
    </location>
    <ligand>
        <name>Fe cation</name>
        <dbReference type="ChEBI" id="CHEBI:24875"/>
    </ligand>
</feature>